<accession>A4JB86</accession>
<dbReference type="EC" id="2.1.1.199" evidence="1"/>
<dbReference type="EMBL" id="CP000614">
    <property type="protein sequence ID" value="ABO53539.1"/>
    <property type="molecule type" value="Genomic_DNA"/>
</dbReference>
<dbReference type="SMR" id="A4JB86"/>
<dbReference type="KEGG" id="bvi:Bcep1808_0527"/>
<dbReference type="eggNOG" id="COG0275">
    <property type="taxonomic scope" value="Bacteria"/>
</dbReference>
<dbReference type="HOGENOM" id="CLU_038422_2_0_4"/>
<dbReference type="Proteomes" id="UP000002287">
    <property type="component" value="Chromosome 1"/>
</dbReference>
<dbReference type="GO" id="GO:0005737">
    <property type="term" value="C:cytoplasm"/>
    <property type="evidence" value="ECO:0007669"/>
    <property type="project" value="UniProtKB-SubCell"/>
</dbReference>
<dbReference type="GO" id="GO:0071424">
    <property type="term" value="F:rRNA (cytosine-N4-)-methyltransferase activity"/>
    <property type="evidence" value="ECO:0007669"/>
    <property type="project" value="UniProtKB-UniRule"/>
</dbReference>
<dbReference type="GO" id="GO:0070475">
    <property type="term" value="P:rRNA base methylation"/>
    <property type="evidence" value="ECO:0007669"/>
    <property type="project" value="UniProtKB-UniRule"/>
</dbReference>
<dbReference type="Gene3D" id="1.10.150.170">
    <property type="entry name" value="Putative methyltransferase TM0872, insert domain"/>
    <property type="match status" value="1"/>
</dbReference>
<dbReference type="Gene3D" id="3.40.50.150">
    <property type="entry name" value="Vaccinia Virus protein VP39"/>
    <property type="match status" value="1"/>
</dbReference>
<dbReference type="HAMAP" id="MF_01007">
    <property type="entry name" value="16SrRNA_methyltr_H"/>
    <property type="match status" value="1"/>
</dbReference>
<dbReference type="InterPro" id="IPR002903">
    <property type="entry name" value="RsmH"/>
</dbReference>
<dbReference type="InterPro" id="IPR023397">
    <property type="entry name" value="SAM-dep_MeTrfase_MraW_recog"/>
</dbReference>
<dbReference type="InterPro" id="IPR029063">
    <property type="entry name" value="SAM-dependent_MTases_sf"/>
</dbReference>
<dbReference type="NCBIfam" id="TIGR00006">
    <property type="entry name" value="16S rRNA (cytosine(1402)-N(4))-methyltransferase RsmH"/>
    <property type="match status" value="1"/>
</dbReference>
<dbReference type="PANTHER" id="PTHR11265:SF0">
    <property type="entry name" value="12S RRNA N4-METHYLCYTIDINE METHYLTRANSFERASE"/>
    <property type="match status" value="1"/>
</dbReference>
<dbReference type="PANTHER" id="PTHR11265">
    <property type="entry name" value="S-ADENOSYL-METHYLTRANSFERASE MRAW"/>
    <property type="match status" value="1"/>
</dbReference>
<dbReference type="Pfam" id="PF01795">
    <property type="entry name" value="Methyltransf_5"/>
    <property type="match status" value="1"/>
</dbReference>
<dbReference type="PIRSF" id="PIRSF004486">
    <property type="entry name" value="MraW"/>
    <property type="match status" value="1"/>
</dbReference>
<dbReference type="SUPFAM" id="SSF81799">
    <property type="entry name" value="Putative methyltransferase TM0872, insert domain"/>
    <property type="match status" value="1"/>
</dbReference>
<dbReference type="SUPFAM" id="SSF53335">
    <property type="entry name" value="S-adenosyl-L-methionine-dependent methyltransferases"/>
    <property type="match status" value="1"/>
</dbReference>
<protein>
    <recommendedName>
        <fullName evidence="1">Ribosomal RNA small subunit methyltransferase H</fullName>
        <ecNumber evidence="1">2.1.1.199</ecNumber>
    </recommendedName>
    <alternativeName>
        <fullName evidence="1">16S rRNA m(4)C1402 methyltransferase</fullName>
    </alternativeName>
    <alternativeName>
        <fullName evidence="1">rRNA (cytosine-N(4)-)-methyltransferase RsmH</fullName>
    </alternativeName>
</protein>
<reference key="1">
    <citation type="submission" date="2007-03" db="EMBL/GenBank/DDBJ databases">
        <title>Complete sequence of chromosome 1 of Burkholderia vietnamiensis G4.</title>
        <authorList>
            <consortium name="US DOE Joint Genome Institute"/>
            <person name="Copeland A."/>
            <person name="Lucas S."/>
            <person name="Lapidus A."/>
            <person name="Barry K."/>
            <person name="Detter J.C."/>
            <person name="Glavina del Rio T."/>
            <person name="Hammon N."/>
            <person name="Israni S."/>
            <person name="Dalin E."/>
            <person name="Tice H."/>
            <person name="Pitluck S."/>
            <person name="Chain P."/>
            <person name="Malfatti S."/>
            <person name="Shin M."/>
            <person name="Vergez L."/>
            <person name="Schmutz J."/>
            <person name="Larimer F."/>
            <person name="Land M."/>
            <person name="Hauser L."/>
            <person name="Kyrpides N."/>
            <person name="Tiedje J."/>
            <person name="Richardson P."/>
        </authorList>
    </citation>
    <scope>NUCLEOTIDE SEQUENCE [LARGE SCALE GENOMIC DNA]</scope>
    <source>
        <strain>G4 / LMG 22486</strain>
    </source>
</reference>
<keyword id="KW-0963">Cytoplasm</keyword>
<keyword id="KW-0489">Methyltransferase</keyword>
<keyword id="KW-0698">rRNA processing</keyword>
<keyword id="KW-0949">S-adenosyl-L-methionine</keyword>
<keyword id="KW-0808">Transferase</keyword>
<organism>
    <name type="scientific">Burkholderia vietnamiensis (strain G4 / LMG 22486)</name>
    <name type="common">Burkholderia cepacia (strain R1808)</name>
    <dbReference type="NCBI Taxonomy" id="269482"/>
    <lineage>
        <taxon>Bacteria</taxon>
        <taxon>Pseudomonadati</taxon>
        <taxon>Pseudomonadota</taxon>
        <taxon>Betaproteobacteria</taxon>
        <taxon>Burkholderiales</taxon>
        <taxon>Burkholderiaceae</taxon>
        <taxon>Burkholderia</taxon>
        <taxon>Burkholderia cepacia complex</taxon>
    </lineage>
</organism>
<evidence type="ECO:0000255" key="1">
    <source>
        <dbReference type="HAMAP-Rule" id="MF_01007"/>
    </source>
</evidence>
<proteinExistence type="inferred from homology"/>
<comment type="function">
    <text evidence="1">Specifically methylates the N4 position of cytidine in position 1402 (C1402) of 16S rRNA.</text>
</comment>
<comment type="catalytic activity">
    <reaction evidence="1">
        <text>cytidine(1402) in 16S rRNA + S-adenosyl-L-methionine = N(4)-methylcytidine(1402) in 16S rRNA + S-adenosyl-L-homocysteine + H(+)</text>
        <dbReference type="Rhea" id="RHEA:42928"/>
        <dbReference type="Rhea" id="RHEA-COMP:10286"/>
        <dbReference type="Rhea" id="RHEA-COMP:10287"/>
        <dbReference type="ChEBI" id="CHEBI:15378"/>
        <dbReference type="ChEBI" id="CHEBI:57856"/>
        <dbReference type="ChEBI" id="CHEBI:59789"/>
        <dbReference type="ChEBI" id="CHEBI:74506"/>
        <dbReference type="ChEBI" id="CHEBI:82748"/>
        <dbReference type="EC" id="2.1.1.199"/>
    </reaction>
</comment>
<comment type="subcellular location">
    <subcellularLocation>
        <location evidence="1">Cytoplasm</location>
    </subcellularLocation>
</comment>
<comment type="similarity">
    <text evidence="1">Belongs to the methyltransferase superfamily. RsmH family.</text>
</comment>
<gene>
    <name evidence="1" type="primary">rsmH</name>
    <name type="synonym">mraW</name>
    <name type="ordered locus">Bcep1808_0527</name>
</gene>
<sequence>MGNELQHRTVLLDEAVDSLVTRPDGIYVDGTFGRGGHSRAVLARLAPGGRLIAFDKDPRAIETAQRIEDARFSIVHDSFASMRDALAARGVEKVSGVLLDLGVSSPQVDDPARGFSFRADGPLDMRMDPTRGESAAEWLARASVQELTEVIRDYGEERFAFQIAKALVARRAESDRLGPLDTTGELAQIVGHVVKTREKGKDPATRTFQAIRIHVNQELADLQVVLDAALSLLEQGGRLVVISFHSLEDRIVKRFMQAHASAPAVDRRLPIRAVDLPSPPLKIISRQFPSEAEVAANPRARSAVMRIAERVTP</sequence>
<name>RSMH_BURVG</name>
<feature type="chain" id="PRO_0000386781" description="Ribosomal RNA small subunit methyltransferase H">
    <location>
        <begin position="1"/>
        <end position="313"/>
    </location>
</feature>
<feature type="binding site" evidence="1">
    <location>
        <begin position="35"/>
        <end position="37"/>
    </location>
    <ligand>
        <name>S-adenosyl-L-methionine</name>
        <dbReference type="ChEBI" id="CHEBI:59789"/>
    </ligand>
</feature>
<feature type="binding site" evidence="1">
    <location>
        <position position="55"/>
    </location>
    <ligand>
        <name>S-adenosyl-L-methionine</name>
        <dbReference type="ChEBI" id="CHEBI:59789"/>
    </ligand>
</feature>
<feature type="binding site" evidence="1">
    <location>
        <position position="79"/>
    </location>
    <ligand>
        <name>S-adenosyl-L-methionine</name>
        <dbReference type="ChEBI" id="CHEBI:59789"/>
    </ligand>
</feature>
<feature type="binding site" evidence="1">
    <location>
        <position position="100"/>
    </location>
    <ligand>
        <name>S-adenosyl-L-methionine</name>
        <dbReference type="ChEBI" id="CHEBI:59789"/>
    </ligand>
</feature>
<feature type="binding site" evidence="1">
    <location>
        <position position="107"/>
    </location>
    <ligand>
        <name>S-adenosyl-L-methionine</name>
        <dbReference type="ChEBI" id="CHEBI:59789"/>
    </ligand>
</feature>